<dbReference type="EC" id="2.5.1.55" evidence="1"/>
<dbReference type="EMBL" id="CP000884">
    <property type="protein sequence ID" value="ABX37735.1"/>
    <property type="molecule type" value="Genomic_DNA"/>
</dbReference>
<dbReference type="RefSeq" id="WP_012206905.1">
    <property type="nucleotide sequence ID" value="NC_010002.1"/>
</dbReference>
<dbReference type="SMR" id="A9BN40"/>
<dbReference type="STRING" id="398578.Daci_5106"/>
<dbReference type="GeneID" id="94690901"/>
<dbReference type="KEGG" id="dac:Daci_5106"/>
<dbReference type="eggNOG" id="COG2877">
    <property type="taxonomic scope" value="Bacteria"/>
</dbReference>
<dbReference type="HOGENOM" id="CLU_036666_0_0_4"/>
<dbReference type="UniPathway" id="UPA00030"/>
<dbReference type="UniPathway" id="UPA00357">
    <property type="reaction ID" value="UER00474"/>
</dbReference>
<dbReference type="Proteomes" id="UP000000784">
    <property type="component" value="Chromosome"/>
</dbReference>
<dbReference type="GO" id="GO:0005737">
    <property type="term" value="C:cytoplasm"/>
    <property type="evidence" value="ECO:0007669"/>
    <property type="project" value="UniProtKB-SubCell"/>
</dbReference>
<dbReference type="GO" id="GO:0008676">
    <property type="term" value="F:3-deoxy-8-phosphooctulonate synthase activity"/>
    <property type="evidence" value="ECO:0007669"/>
    <property type="project" value="UniProtKB-UniRule"/>
</dbReference>
<dbReference type="GO" id="GO:0019294">
    <property type="term" value="P:keto-3-deoxy-D-manno-octulosonic acid biosynthetic process"/>
    <property type="evidence" value="ECO:0007669"/>
    <property type="project" value="UniProtKB-UniRule"/>
</dbReference>
<dbReference type="Gene3D" id="3.20.20.70">
    <property type="entry name" value="Aldolase class I"/>
    <property type="match status" value="1"/>
</dbReference>
<dbReference type="HAMAP" id="MF_00056">
    <property type="entry name" value="KDO8P_synth"/>
    <property type="match status" value="1"/>
</dbReference>
<dbReference type="InterPro" id="IPR013785">
    <property type="entry name" value="Aldolase_TIM"/>
</dbReference>
<dbReference type="InterPro" id="IPR006218">
    <property type="entry name" value="DAHP1/KDSA"/>
</dbReference>
<dbReference type="InterPro" id="IPR006269">
    <property type="entry name" value="KDO8P_synthase"/>
</dbReference>
<dbReference type="NCBIfam" id="TIGR01362">
    <property type="entry name" value="KDO8P_synth"/>
    <property type="match status" value="1"/>
</dbReference>
<dbReference type="NCBIfam" id="NF003543">
    <property type="entry name" value="PRK05198.1"/>
    <property type="match status" value="1"/>
</dbReference>
<dbReference type="PANTHER" id="PTHR21057">
    <property type="entry name" value="PHOSPHO-2-DEHYDRO-3-DEOXYHEPTONATE ALDOLASE"/>
    <property type="match status" value="1"/>
</dbReference>
<dbReference type="Pfam" id="PF00793">
    <property type="entry name" value="DAHP_synth_1"/>
    <property type="match status" value="1"/>
</dbReference>
<dbReference type="SUPFAM" id="SSF51569">
    <property type="entry name" value="Aldolase"/>
    <property type="match status" value="1"/>
</dbReference>
<organism>
    <name type="scientific">Delftia acidovorans (strain DSM 14801 / SPH-1)</name>
    <dbReference type="NCBI Taxonomy" id="398578"/>
    <lineage>
        <taxon>Bacteria</taxon>
        <taxon>Pseudomonadati</taxon>
        <taxon>Pseudomonadota</taxon>
        <taxon>Betaproteobacteria</taxon>
        <taxon>Burkholderiales</taxon>
        <taxon>Comamonadaceae</taxon>
        <taxon>Delftia</taxon>
    </lineage>
</organism>
<feature type="chain" id="PRO_1000091810" description="2-dehydro-3-deoxyphosphooctonate aldolase">
    <location>
        <begin position="1"/>
        <end position="285"/>
    </location>
</feature>
<proteinExistence type="inferred from homology"/>
<accession>A9BN40</accession>
<name>KDSA_DELAS</name>
<reference key="1">
    <citation type="submission" date="2007-11" db="EMBL/GenBank/DDBJ databases">
        <title>Complete sequence of Delftia acidovorans DSM 14801 / SPH-1.</title>
        <authorList>
            <person name="Copeland A."/>
            <person name="Lucas S."/>
            <person name="Lapidus A."/>
            <person name="Barry K."/>
            <person name="Glavina del Rio T."/>
            <person name="Dalin E."/>
            <person name="Tice H."/>
            <person name="Pitluck S."/>
            <person name="Lowry S."/>
            <person name="Clum A."/>
            <person name="Schmutz J."/>
            <person name="Larimer F."/>
            <person name="Land M."/>
            <person name="Hauser L."/>
            <person name="Kyrpides N."/>
            <person name="Kim E."/>
            <person name="Schleheck D."/>
            <person name="Richardson P."/>
        </authorList>
    </citation>
    <scope>NUCLEOTIDE SEQUENCE [LARGE SCALE GENOMIC DNA]</scope>
    <source>
        <strain>DSM 14801 / SPH-1</strain>
    </source>
</reference>
<protein>
    <recommendedName>
        <fullName evidence="1">2-dehydro-3-deoxyphosphooctonate aldolase</fullName>
        <ecNumber evidence="1">2.5.1.55</ecNumber>
    </recommendedName>
    <alternativeName>
        <fullName evidence="1">3-deoxy-D-manno-octulosonic acid 8-phosphate synthase</fullName>
    </alternativeName>
    <alternativeName>
        <fullName evidence="1">KDO-8-phosphate synthase</fullName>
        <shortName evidence="1">KDO 8-P synthase</shortName>
        <shortName evidence="1">KDOPS</shortName>
    </alternativeName>
    <alternativeName>
        <fullName evidence="1">Phospho-2-dehydro-3-deoxyoctonate aldolase</fullName>
    </alternativeName>
</protein>
<sequence length="285" mass="30525">MKLCGFDVGLDRRFFLIAGPCVVESEQLQMDVAGHLKEITAALGIHFIFKSSYDKANRSSGASFRGPGMDKGLEILAKVKKDLQVPILTDVHTESEIPAVSQVVDVLQTPAFLCRQTDFIRAVAQSGRPVNIKKGQFLAPHDMKNVIDKARAAAKEAGLPEDSFMACERGASFGYNNLVSDMRSLSIMRETGAPVVFDATHSVQLPGGNGTSSGGMREMVPVLSRAAVAVGVAGLFMETHPNPPCALSDGPNAVPLKHMKALLETLVALDDVTKKNGFLENDFGV</sequence>
<evidence type="ECO:0000255" key="1">
    <source>
        <dbReference type="HAMAP-Rule" id="MF_00056"/>
    </source>
</evidence>
<keyword id="KW-0963">Cytoplasm</keyword>
<keyword id="KW-0448">Lipopolysaccharide biosynthesis</keyword>
<keyword id="KW-1185">Reference proteome</keyword>
<keyword id="KW-0808">Transferase</keyword>
<gene>
    <name evidence="1" type="primary">kdsA</name>
    <name type="ordered locus">Daci_5106</name>
</gene>
<comment type="catalytic activity">
    <reaction evidence="1">
        <text>D-arabinose 5-phosphate + phosphoenolpyruvate + H2O = 3-deoxy-alpha-D-manno-2-octulosonate-8-phosphate + phosphate</text>
        <dbReference type="Rhea" id="RHEA:14053"/>
        <dbReference type="ChEBI" id="CHEBI:15377"/>
        <dbReference type="ChEBI" id="CHEBI:43474"/>
        <dbReference type="ChEBI" id="CHEBI:57693"/>
        <dbReference type="ChEBI" id="CHEBI:58702"/>
        <dbReference type="ChEBI" id="CHEBI:85985"/>
        <dbReference type="EC" id="2.5.1.55"/>
    </reaction>
</comment>
<comment type="pathway">
    <text evidence="1">Carbohydrate biosynthesis; 3-deoxy-D-manno-octulosonate biosynthesis; 3-deoxy-D-manno-octulosonate from D-ribulose 5-phosphate: step 2/3.</text>
</comment>
<comment type="pathway">
    <text evidence="1">Bacterial outer membrane biogenesis; lipopolysaccharide biosynthesis.</text>
</comment>
<comment type="subcellular location">
    <subcellularLocation>
        <location evidence="1">Cytoplasm</location>
    </subcellularLocation>
</comment>
<comment type="similarity">
    <text evidence="1">Belongs to the KdsA family.</text>
</comment>